<keyword id="KW-0025">Alternative splicing</keyword>
<keyword id="KW-0175">Coiled coil</keyword>
<keyword id="KW-0479">Metal-binding</keyword>
<keyword id="KW-1267">Proteomics identification</keyword>
<keyword id="KW-1185">Reference proteome</keyword>
<keyword id="KW-0862">Zinc</keyword>
<keyword id="KW-0863">Zinc-finger</keyword>
<dbReference type="EMBL" id="CR456448">
    <property type="protein sequence ID" value="CAG30334.1"/>
    <property type="molecule type" value="mRNA"/>
</dbReference>
<dbReference type="EMBL" id="AK092243">
    <property type="protein sequence ID" value="BAG52506.1"/>
    <property type="molecule type" value="mRNA"/>
</dbReference>
<dbReference type="EMBL" id="AK297317">
    <property type="protein sequence ID" value="BAH12544.1"/>
    <property type="molecule type" value="mRNA"/>
</dbReference>
<dbReference type="EMBL" id="AL049760">
    <property type="status" value="NOT_ANNOTATED_CDS"/>
    <property type="molecule type" value="Genomic_DNA"/>
</dbReference>
<dbReference type="EMBL" id="Z83838">
    <property type="status" value="NOT_ANNOTATED_CDS"/>
    <property type="molecule type" value="Genomic_DNA"/>
</dbReference>
<dbReference type="EMBL" id="CH471138">
    <property type="protein sequence ID" value="EAW73366.1"/>
    <property type="molecule type" value="Genomic_DNA"/>
</dbReference>
<dbReference type="EMBL" id="BC012187">
    <property type="protein sequence ID" value="AAH12187.1"/>
    <property type="molecule type" value="mRNA"/>
</dbReference>
<dbReference type="CCDS" id="CCDS14061.1">
    <molecule id="Q96EK2-1"/>
</dbReference>
<dbReference type="CCDS" id="CCDS46727.1">
    <molecule id="Q96EK2-3"/>
</dbReference>
<dbReference type="CCDS" id="CCDS56234.1">
    <molecule id="Q96EK2-4"/>
</dbReference>
<dbReference type="RefSeq" id="NP_001129334.1">
    <molecule id="Q96EK2-3"/>
    <property type="nucleotide sequence ID" value="NM_001135862.3"/>
</dbReference>
<dbReference type="RefSeq" id="NP_001229379.1">
    <molecule id="Q96EK2-4"/>
    <property type="nucleotide sequence ID" value="NM_001242450.2"/>
</dbReference>
<dbReference type="RefSeq" id="NP_001271225.1">
    <property type="nucleotide sequence ID" value="NM_001284296.1"/>
</dbReference>
<dbReference type="RefSeq" id="NP_001399992.1">
    <molecule id="Q96EK2-3"/>
    <property type="nucleotide sequence ID" value="NM_001413063.1"/>
</dbReference>
<dbReference type="RefSeq" id="NP_612424.1">
    <molecule id="Q96EK2-1"/>
    <property type="nucleotide sequence ID" value="NM_138415.5"/>
</dbReference>
<dbReference type="RefSeq" id="XP_006724185.1">
    <property type="nucleotide sequence ID" value="XM_006724122.1"/>
</dbReference>
<dbReference type="SMR" id="Q96EK2"/>
<dbReference type="BioGRID" id="125214">
    <property type="interactions" value="19"/>
</dbReference>
<dbReference type="CORUM" id="Q96EK2"/>
<dbReference type="FunCoup" id="Q96EK2">
    <property type="interactions" value="114"/>
</dbReference>
<dbReference type="IntAct" id="Q96EK2">
    <property type="interactions" value="17"/>
</dbReference>
<dbReference type="MINT" id="Q96EK2"/>
<dbReference type="STRING" id="9606.ENSP00000324403"/>
<dbReference type="GlyGen" id="Q96EK2">
    <property type="glycosylation" value="1 site, 1 O-linked glycan (1 site)"/>
</dbReference>
<dbReference type="iPTMnet" id="Q96EK2"/>
<dbReference type="PhosphoSitePlus" id="Q96EK2"/>
<dbReference type="BioMuta" id="PHF21B"/>
<dbReference type="DMDM" id="74731574"/>
<dbReference type="jPOST" id="Q96EK2"/>
<dbReference type="MassIVE" id="Q96EK2"/>
<dbReference type="PaxDb" id="9606-ENSP00000324403"/>
<dbReference type="PeptideAtlas" id="Q96EK2"/>
<dbReference type="ProteomicsDB" id="76413">
    <molecule id="Q96EK2-1"/>
</dbReference>
<dbReference type="ProteomicsDB" id="76414">
    <molecule id="Q96EK2-3"/>
</dbReference>
<dbReference type="ProteomicsDB" id="76415">
    <molecule id="Q96EK2-4"/>
</dbReference>
<dbReference type="Antibodypedia" id="27774">
    <property type="antibodies" value="154 antibodies from 18 providers"/>
</dbReference>
<dbReference type="DNASU" id="112885"/>
<dbReference type="Ensembl" id="ENST00000313237.10">
    <molecule id="Q96EK2-1"/>
    <property type="protein sequence ID" value="ENSP00000324403.5"/>
    <property type="gene ID" value="ENSG00000056487.17"/>
</dbReference>
<dbReference type="Ensembl" id="ENST00000420689.2">
    <molecule id="Q96EK2-4"/>
    <property type="protein sequence ID" value="ENSP00000401294.2"/>
    <property type="gene ID" value="ENSG00000056487.17"/>
</dbReference>
<dbReference type="Ensembl" id="ENST00000629843.3">
    <molecule id="Q96EK2-3"/>
    <property type="protein sequence ID" value="ENSP00000487086.1"/>
    <property type="gene ID" value="ENSG00000056487.17"/>
</dbReference>
<dbReference type="GeneID" id="112885"/>
<dbReference type="KEGG" id="hsa:112885"/>
<dbReference type="MANE-Select" id="ENST00000313237.10">
    <property type="protein sequence ID" value="ENSP00000324403.5"/>
    <property type="RefSeq nucleotide sequence ID" value="NM_138415.5"/>
    <property type="RefSeq protein sequence ID" value="NP_612424.1"/>
</dbReference>
<dbReference type="UCSC" id="uc003bfn.4">
    <molecule id="Q96EK2-1"/>
    <property type="organism name" value="human"/>
</dbReference>
<dbReference type="AGR" id="HGNC:25161"/>
<dbReference type="CTD" id="112885"/>
<dbReference type="DisGeNET" id="112885"/>
<dbReference type="GeneCards" id="PHF21B"/>
<dbReference type="HGNC" id="HGNC:25161">
    <property type="gene designation" value="PHF21B"/>
</dbReference>
<dbReference type="HPA" id="ENSG00000056487">
    <property type="expression patterns" value="Tissue enhanced (cervix, pituitary gland)"/>
</dbReference>
<dbReference type="MIM" id="616727">
    <property type="type" value="gene"/>
</dbReference>
<dbReference type="neXtProt" id="NX_Q96EK2"/>
<dbReference type="OpenTargets" id="ENSG00000056487"/>
<dbReference type="PharmGKB" id="PA134872136"/>
<dbReference type="VEuPathDB" id="HostDB:ENSG00000056487"/>
<dbReference type="eggNOG" id="KOG0383">
    <property type="taxonomic scope" value="Eukaryota"/>
</dbReference>
<dbReference type="GeneTree" id="ENSGT00940000161105"/>
<dbReference type="HOGENOM" id="CLU_020260_1_0_1"/>
<dbReference type="InParanoid" id="Q96EK2"/>
<dbReference type="OMA" id="VCMDQRD"/>
<dbReference type="OrthoDB" id="336088at2759"/>
<dbReference type="PAN-GO" id="Q96EK2">
    <property type="GO annotations" value="0 GO annotations based on evolutionary models"/>
</dbReference>
<dbReference type="PhylomeDB" id="Q96EK2"/>
<dbReference type="TreeFam" id="TF331518"/>
<dbReference type="PathwayCommons" id="Q96EK2"/>
<dbReference type="SignaLink" id="Q96EK2"/>
<dbReference type="BioGRID-ORCS" id="112885">
    <property type="hits" value="9 hits in 1148 CRISPR screens"/>
</dbReference>
<dbReference type="ChiTaRS" id="PHF21B">
    <property type="organism name" value="human"/>
</dbReference>
<dbReference type="GenomeRNAi" id="112885"/>
<dbReference type="Pharos" id="Q96EK2">
    <property type="development level" value="Tbio"/>
</dbReference>
<dbReference type="PRO" id="PR:Q96EK2"/>
<dbReference type="Proteomes" id="UP000005640">
    <property type="component" value="Chromosome 22"/>
</dbReference>
<dbReference type="RNAct" id="Q96EK2">
    <property type="molecule type" value="protein"/>
</dbReference>
<dbReference type="Bgee" id="ENSG00000056487">
    <property type="expression patterns" value="Expressed in ganglionic eminence and 94 other cell types or tissues"/>
</dbReference>
<dbReference type="ExpressionAtlas" id="Q96EK2">
    <property type="expression patterns" value="baseline and differential"/>
</dbReference>
<dbReference type="GO" id="GO:0008270">
    <property type="term" value="F:zinc ion binding"/>
    <property type="evidence" value="ECO:0007669"/>
    <property type="project" value="UniProtKB-KW"/>
</dbReference>
<dbReference type="CDD" id="cd15524">
    <property type="entry name" value="PHD_PHF21B"/>
    <property type="match status" value="1"/>
</dbReference>
<dbReference type="Gene3D" id="3.30.40.10">
    <property type="entry name" value="Zinc/RING finger domain, C3HC4 (zinc finger)"/>
    <property type="match status" value="1"/>
</dbReference>
<dbReference type="InterPro" id="IPR011011">
    <property type="entry name" value="Znf_FYVE_PHD"/>
</dbReference>
<dbReference type="InterPro" id="IPR001965">
    <property type="entry name" value="Znf_PHD"/>
</dbReference>
<dbReference type="InterPro" id="IPR019787">
    <property type="entry name" value="Znf_PHD-finger"/>
</dbReference>
<dbReference type="InterPro" id="IPR013083">
    <property type="entry name" value="Znf_RING/FYVE/PHD"/>
</dbReference>
<dbReference type="PANTHER" id="PTHR24102">
    <property type="entry name" value="PHD FINGER PROTEIN"/>
    <property type="match status" value="1"/>
</dbReference>
<dbReference type="PANTHER" id="PTHR24102:SF18">
    <property type="entry name" value="PHD FINGER PROTEIN 21B"/>
    <property type="match status" value="1"/>
</dbReference>
<dbReference type="Pfam" id="PF00628">
    <property type="entry name" value="PHD"/>
    <property type="match status" value="1"/>
</dbReference>
<dbReference type="SMART" id="SM00249">
    <property type="entry name" value="PHD"/>
    <property type="match status" value="1"/>
</dbReference>
<dbReference type="SUPFAM" id="SSF57903">
    <property type="entry name" value="FYVE/PHD zinc finger"/>
    <property type="match status" value="1"/>
</dbReference>
<dbReference type="PROSITE" id="PS50016">
    <property type="entry name" value="ZF_PHD_2"/>
    <property type="match status" value="1"/>
</dbReference>
<protein>
    <recommendedName>
        <fullName>PHD finger protein 21B</fullName>
    </recommendedName>
</protein>
<organism>
    <name type="scientific">Homo sapiens</name>
    <name type="common">Human</name>
    <dbReference type="NCBI Taxonomy" id="9606"/>
    <lineage>
        <taxon>Eukaryota</taxon>
        <taxon>Metazoa</taxon>
        <taxon>Chordata</taxon>
        <taxon>Craniata</taxon>
        <taxon>Vertebrata</taxon>
        <taxon>Euteleostomi</taxon>
        <taxon>Mammalia</taxon>
        <taxon>Eutheria</taxon>
        <taxon>Euarchontoglires</taxon>
        <taxon>Primates</taxon>
        <taxon>Haplorrhini</taxon>
        <taxon>Catarrhini</taxon>
        <taxon>Hominidae</taxon>
        <taxon>Homo</taxon>
    </lineage>
</organism>
<evidence type="ECO:0000255" key="1"/>
<evidence type="ECO:0000255" key="2">
    <source>
        <dbReference type="PROSITE-ProRule" id="PRU00146"/>
    </source>
</evidence>
<evidence type="ECO:0000256" key="3">
    <source>
        <dbReference type="SAM" id="MobiDB-lite"/>
    </source>
</evidence>
<evidence type="ECO:0000303" key="4">
    <source>
    </source>
</evidence>
<evidence type="ECO:0000303" key="5">
    <source>
    </source>
</evidence>
<gene>
    <name type="primary">PHF21B</name>
    <name type="synonym">KIAA1661</name>
</gene>
<feature type="chain" id="PRO_0000226769" description="PHD finger protein 21B">
    <location>
        <begin position="1"/>
        <end position="531"/>
    </location>
</feature>
<feature type="zinc finger region" description="PHD-type" evidence="2">
    <location>
        <begin position="352"/>
        <end position="399"/>
    </location>
</feature>
<feature type="region of interest" description="Disordered" evidence="3">
    <location>
        <begin position="79"/>
        <end position="99"/>
    </location>
</feature>
<feature type="region of interest" description="Disordered" evidence="3">
    <location>
        <begin position="184"/>
        <end position="222"/>
    </location>
</feature>
<feature type="region of interest" description="Disordered" evidence="3">
    <location>
        <begin position="238"/>
        <end position="277"/>
    </location>
</feature>
<feature type="region of interest" description="Disordered" evidence="3">
    <location>
        <begin position="295"/>
        <end position="314"/>
    </location>
</feature>
<feature type="region of interest" description="Disordered" evidence="3">
    <location>
        <begin position="507"/>
        <end position="531"/>
    </location>
</feature>
<feature type="coiled-coil region" evidence="1">
    <location>
        <begin position="423"/>
        <end position="465"/>
    </location>
</feature>
<feature type="compositionally biased region" description="Basic and acidic residues" evidence="3">
    <location>
        <begin position="265"/>
        <end position="277"/>
    </location>
</feature>
<feature type="compositionally biased region" description="Polar residues" evidence="3">
    <location>
        <begin position="522"/>
        <end position="531"/>
    </location>
</feature>
<feature type="splice variant" id="VSP_043149" description="In isoform 3." evidence="4">
    <original>MELQSRPEALAVELARH</original>
    <variation>MRRQP</variation>
    <location>
        <begin position="1"/>
        <end position="17"/>
    </location>
</feature>
<feature type="splice variant" id="VSP_017456" description="In isoform 2 and isoform 3." evidence="4 5">
    <location>
        <begin position="189"/>
        <end position="230"/>
    </location>
</feature>
<feature type="sequence variant" id="VAR_051601" description="In dbSNP:rs8135982.">
    <original>G</original>
    <variation>S</variation>
    <location>
        <position position="127"/>
    </location>
</feature>
<comment type="interaction">
    <interactant intactId="EBI-16437793">
        <id>Q96EK2-3</id>
    </interactant>
    <interactant intactId="EBI-11524452">
        <id>Q8N9N5-2</id>
        <label>BANP</label>
    </interactant>
    <organismsDiffer>false</organismsDiffer>
    <experiments>3</experiments>
</comment>
<comment type="interaction">
    <interactant intactId="EBI-16437793">
        <id>Q96EK2-3</id>
    </interactant>
    <interactant intactId="EBI-1504830">
        <id>Q9P2K3-2</id>
        <label>RCOR3</label>
    </interactant>
    <organismsDiffer>false</organismsDiffer>
    <experiments>3</experiments>
</comment>
<comment type="alternative products">
    <event type="alternative splicing"/>
    <isoform>
        <id>Q96EK2-1</id>
        <name>1</name>
        <sequence type="displayed"/>
    </isoform>
    <isoform>
        <id>Q96EK2-3</id>
        <name>2</name>
        <name>3</name>
        <sequence type="described" ref="VSP_017456"/>
    </isoform>
    <isoform>
        <id>Q96EK2-4</id>
        <name>3</name>
        <sequence type="described" ref="VSP_043149 VSP_017456"/>
    </isoform>
</comment>
<sequence length="531" mass="57455">MELQSRPEALAVELARHQNGDLKKQLHERQPRIAALSDKQALGTITAVPVTGPQVSSLQRLAGQGAAVLPQVRPKTLIPDSLPVAPGRDRPPKQPPTFQKATVVSVKNPSPALPTANNTVSHVPAPGSQPQALAEPAALASPLSSAGVAYAIISTSPSNAAAMAPSTAVSVVSDSIKVQPLLISADNKPPPRLLSSPHPATHHCPLHPSSLPLTPPSPSLSPSPLHGIFQVIIIQPQVQTQPESTAESRPPTEEPSQGAQATKKKKEDRPPTQENPEKIAFMVALGLVTTEHLEEIQSKRQERKRRSTANPAYSGLLETERKRLASNYLNNPLFLTARANEDPCWKNEITHDEHCAACKRGANLQPCGTCPGAYHLSCLEPPLKTAPKGVWVCPRCQQKALKKDEGVPWTGMLAIVHSYVTHKTVKEEEKQKLLQRGSELQNEHQQLEERDRRLASAVQKCLELKTSLLARQRGTQSSLDRLRALLRLIQGEQLLQVTMTTTSPAPLLAGPWTKPSVAATHPTVQHPQGHN</sequence>
<name>PF21B_HUMAN</name>
<reference key="1">
    <citation type="journal article" date="2004" name="Genome Biol.">
        <title>A genome annotation-driven approach to cloning the human ORFeome.</title>
        <authorList>
            <person name="Collins J.E."/>
            <person name="Wright C.L."/>
            <person name="Edwards C.A."/>
            <person name="Davis M.P."/>
            <person name="Grinham J.A."/>
            <person name="Cole C.G."/>
            <person name="Goward M.E."/>
            <person name="Aguado B."/>
            <person name="Mallya M."/>
            <person name="Mokrab Y."/>
            <person name="Huckle E.J."/>
            <person name="Beare D.M."/>
            <person name="Dunham I."/>
        </authorList>
    </citation>
    <scope>NUCLEOTIDE SEQUENCE [LARGE SCALE MRNA] (ISOFORM 2)</scope>
</reference>
<reference key="2">
    <citation type="journal article" date="2004" name="Nat. Genet.">
        <title>Complete sequencing and characterization of 21,243 full-length human cDNAs.</title>
        <authorList>
            <person name="Ota T."/>
            <person name="Suzuki Y."/>
            <person name="Nishikawa T."/>
            <person name="Otsuki T."/>
            <person name="Sugiyama T."/>
            <person name="Irie R."/>
            <person name="Wakamatsu A."/>
            <person name="Hayashi K."/>
            <person name="Sato H."/>
            <person name="Nagai K."/>
            <person name="Kimura K."/>
            <person name="Makita H."/>
            <person name="Sekine M."/>
            <person name="Obayashi M."/>
            <person name="Nishi T."/>
            <person name="Shibahara T."/>
            <person name="Tanaka T."/>
            <person name="Ishii S."/>
            <person name="Yamamoto J."/>
            <person name="Saito K."/>
            <person name="Kawai Y."/>
            <person name="Isono Y."/>
            <person name="Nakamura Y."/>
            <person name="Nagahari K."/>
            <person name="Murakami K."/>
            <person name="Yasuda T."/>
            <person name="Iwayanagi T."/>
            <person name="Wagatsuma M."/>
            <person name="Shiratori A."/>
            <person name="Sudo H."/>
            <person name="Hosoiri T."/>
            <person name="Kaku Y."/>
            <person name="Kodaira H."/>
            <person name="Kondo H."/>
            <person name="Sugawara M."/>
            <person name="Takahashi M."/>
            <person name="Kanda K."/>
            <person name="Yokoi T."/>
            <person name="Furuya T."/>
            <person name="Kikkawa E."/>
            <person name="Omura Y."/>
            <person name="Abe K."/>
            <person name="Kamihara K."/>
            <person name="Katsuta N."/>
            <person name="Sato K."/>
            <person name="Tanikawa M."/>
            <person name="Yamazaki M."/>
            <person name="Ninomiya K."/>
            <person name="Ishibashi T."/>
            <person name="Yamashita H."/>
            <person name="Murakawa K."/>
            <person name="Fujimori K."/>
            <person name="Tanai H."/>
            <person name="Kimata M."/>
            <person name="Watanabe M."/>
            <person name="Hiraoka S."/>
            <person name="Chiba Y."/>
            <person name="Ishida S."/>
            <person name="Ono Y."/>
            <person name="Takiguchi S."/>
            <person name="Watanabe S."/>
            <person name="Yosida M."/>
            <person name="Hotuta T."/>
            <person name="Kusano J."/>
            <person name="Kanehori K."/>
            <person name="Takahashi-Fujii A."/>
            <person name="Hara H."/>
            <person name="Tanase T.-O."/>
            <person name="Nomura Y."/>
            <person name="Togiya S."/>
            <person name="Komai F."/>
            <person name="Hara R."/>
            <person name="Takeuchi K."/>
            <person name="Arita M."/>
            <person name="Imose N."/>
            <person name="Musashino K."/>
            <person name="Yuuki H."/>
            <person name="Oshima A."/>
            <person name="Sasaki N."/>
            <person name="Aotsuka S."/>
            <person name="Yoshikawa Y."/>
            <person name="Matsunawa H."/>
            <person name="Ichihara T."/>
            <person name="Shiohata N."/>
            <person name="Sano S."/>
            <person name="Moriya S."/>
            <person name="Momiyama H."/>
            <person name="Satoh N."/>
            <person name="Takami S."/>
            <person name="Terashima Y."/>
            <person name="Suzuki O."/>
            <person name="Nakagawa S."/>
            <person name="Senoh A."/>
            <person name="Mizoguchi H."/>
            <person name="Goto Y."/>
            <person name="Shimizu F."/>
            <person name="Wakebe H."/>
            <person name="Hishigaki H."/>
            <person name="Watanabe T."/>
            <person name="Sugiyama A."/>
            <person name="Takemoto M."/>
            <person name="Kawakami B."/>
            <person name="Yamazaki M."/>
            <person name="Watanabe K."/>
            <person name="Kumagai A."/>
            <person name="Itakura S."/>
            <person name="Fukuzumi Y."/>
            <person name="Fujimori Y."/>
            <person name="Komiyama M."/>
            <person name="Tashiro H."/>
            <person name="Tanigami A."/>
            <person name="Fujiwara T."/>
            <person name="Ono T."/>
            <person name="Yamada K."/>
            <person name="Fujii Y."/>
            <person name="Ozaki K."/>
            <person name="Hirao M."/>
            <person name="Ohmori Y."/>
            <person name="Kawabata A."/>
            <person name="Hikiji T."/>
            <person name="Kobatake N."/>
            <person name="Inagaki H."/>
            <person name="Ikema Y."/>
            <person name="Okamoto S."/>
            <person name="Okitani R."/>
            <person name="Kawakami T."/>
            <person name="Noguchi S."/>
            <person name="Itoh T."/>
            <person name="Shigeta K."/>
            <person name="Senba T."/>
            <person name="Matsumura K."/>
            <person name="Nakajima Y."/>
            <person name="Mizuno T."/>
            <person name="Morinaga M."/>
            <person name="Sasaki M."/>
            <person name="Togashi T."/>
            <person name="Oyama M."/>
            <person name="Hata H."/>
            <person name="Watanabe M."/>
            <person name="Komatsu T."/>
            <person name="Mizushima-Sugano J."/>
            <person name="Satoh T."/>
            <person name="Shirai Y."/>
            <person name="Takahashi Y."/>
            <person name="Nakagawa K."/>
            <person name="Okumura K."/>
            <person name="Nagase T."/>
            <person name="Nomura N."/>
            <person name="Kikuchi H."/>
            <person name="Masuho Y."/>
            <person name="Yamashita R."/>
            <person name="Nakai K."/>
            <person name="Yada T."/>
            <person name="Nakamura Y."/>
            <person name="Ohara O."/>
            <person name="Isogai T."/>
            <person name="Sugano S."/>
        </authorList>
    </citation>
    <scope>NUCLEOTIDE SEQUENCE [LARGE SCALE MRNA] (ISOFORMS 2 AND 3)</scope>
    <source>
        <tissue>Brain</tissue>
    </source>
</reference>
<reference key="3">
    <citation type="journal article" date="1999" name="Nature">
        <title>The DNA sequence of human chromosome 22.</title>
        <authorList>
            <person name="Dunham I."/>
            <person name="Hunt A.R."/>
            <person name="Collins J.E."/>
            <person name="Bruskiewich R."/>
            <person name="Beare D.M."/>
            <person name="Clamp M."/>
            <person name="Smink L.J."/>
            <person name="Ainscough R."/>
            <person name="Almeida J.P."/>
            <person name="Babbage A.K."/>
            <person name="Bagguley C."/>
            <person name="Bailey J."/>
            <person name="Barlow K.F."/>
            <person name="Bates K.N."/>
            <person name="Beasley O.P."/>
            <person name="Bird C.P."/>
            <person name="Blakey S.E."/>
            <person name="Bridgeman A.M."/>
            <person name="Buck D."/>
            <person name="Burgess J."/>
            <person name="Burrill W.D."/>
            <person name="Burton J."/>
            <person name="Carder C."/>
            <person name="Carter N.P."/>
            <person name="Chen Y."/>
            <person name="Clark G."/>
            <person name="Clegg S.M."/>
            <person name="Cobley V.E."/>
            <person name="Cole C.G."/>
            <person name="Collier R.E."/>
            <person name="Connor R."/>
            <person name="Conroy D."/>
            <person name="Corby N.R."/>
            <person name="Coville G.J."/>
            <person name="Cox A.V."/>
            <person name="Davis J."/>
            <person name="Dawson E."/>
            <person name="Dhami P.D."/>
            <person name="Dockree C."/>
            <person name="Dodsworth S.J."/>
            <person name="Durbin R.M."/>
            <person name="Ellington A.G."/>
            <person name="Evans K.L."/>
            <person name="Fey J.M."/>
            <person name="Fleming K."/>
            <person name="French L."/>
            <person name="Garner A.A."/>
            <person name="Gilbert J.G.R."/>
            <person name="Goward M.E."/>
            <person name="Grafham D.V."/>
            <person name="Griffiths M.N.D."/>
            <person name="Hall C."/>
            <person name="Hall R.E."/>
            <person name="Hall-Tamlyn G."/>
            <person name="Heathcott R.W."/>
            <person name="Ho S."/>
            <person name="Holmes S."/>
            <person name="Hunt S.E."/>
            <person name="Jones M.C."/>
            <person name="Kershaw J."/>
            <person name="Kimberley A.M."/>
            <person name="King A."/>
            <person name="Laird G.K."/>
            <person name="Langford C.F."/>
            <person name="Leversha M.A."/>
            <person name="Lloyd C."/>
            <person name="Lloyd D.M."/>
            <person name="Martyn I.D."/>
            <person name="Mashreghi-Mohammadi M."/>
            <person name="Matthews L.H."/>
            <person name="Mccann O.T."/>
            <person name="Mcclay J."/>
            <person name="Mclaren S."/>
            <person name="McMurray A.A."/>
            <person name="Milne S.A."/>
            <person name="Mortimore B.J."/>
            <person name="Odell C.N."/>
            <person name="Pavitt R."/>
            <person name="Pearce A.V."/>
            <person name="Pearson D."/>
            <person name="Phillimore B.J.C.T."/>
            <person name="Phillips S.H."/>
            <person name="Plumb R.W."/>
            <person name="Ramsay H."/>
            <person name="Ramsey Y."/>
            <person name="Rogers L."/>
            <person name="Ross M.T."/>
            <person name="Scott C.E."/>
            <person name="Sehra H.K."/>
            <person name="Skuce C.D."/>
            <person name="Smalley S."/>
            <person name="Smith M.L."/>
            <person name="Soderlund C."/>
            <person name="Spragon L."/>
            <person name="Steward C.A."/>
            <person name="Sulston J.E."/>
            <person name="Swann R.M."/>
            <person name="Vaudin M."/>
            <person name="Wall M."/>
            <person name="Wallis J.M."/>
            <person name="Whiteley M.N."/>
            <person name="Willey D.L."/>
            <person name="Williams L."/>
            <person name="Williams S.A."/>
            <person name="Williamson H."/>
            <person name="Wilmer T.E."/>
            <person name="Wilming L."/>
            <person name="Wright C.L."/>
            <person name="Hubbard T."/>
            <person name="Bentley D.R."/>
            <person name="Beck S."/>
            <person name="Rogers J."/>
            <person name="Shimizu N."/>
            <person name="Minoshima S."/>
            <person name="Kawasaki K."/>
            <person name="Sasaki T."/>
            <person name="Asakawa S."/>
            <person name="Kudoh J."/>
            <person name="Shintani A."/>
            <person name="Shibuya K."/>
            <person name="Yoshizaki Y."/>
            <person name="Aoki N."/>
            <person name="Mitsuyama S."/>
            <person name="Roe B.A."/>
            <person name="Chen F."/>
            <person name="Chu L."/>
            <person name="Crabtree J."/>
            <person name="Deschamps S."/>
            <person name="Do A."/>
            <person name="Do T."/>
            <person name="Dorman A."/>
            <person name="Fang F."/>
            <person name="Fu Y."/>
            <person name="Hu P."/>
            <person name="Hua A."/>
            <person name="Kenton S."/>
            <person name="Lai H."/>
            <person name="Lao H.I."/>
            <person name="Lewis J."/>
            <person name="Lewis S."/>
            <person name="Lin S.-P."/>
            <person name="Loh P."/>
            <person name="Malaj E."/>
            <person name="Nguyen T."/>
            <person name="Pan H."/>
            <person name="Phan S."/>
            <person name="Qi S."/>
            <person name="Qian Y."/>
            <person name="Ray L."/>
            <person name="Ren Q."/>
            <person name="Shaull S."/>
            <person name="Sloan D."/>
            <person name="Song L."/>
            <person name="Wang Q."/>
            <person name="Wang Y."/>
            <person name="Wang Z."/>
            <person name="White J."/>
            <person name="Willingham D."/>
            <person name="Wu H."/>
            <person name="Yao Z."/>
            <person name="Zhan M."/>
            <person name="Zhang G."/>
            <person name="Chissoe S."/>
            <person name="Murray J."/>
            <person name="Miller N."/>
            <person name="Minx P."/>
            <person name="Fulton R."/>
            <person name="Johnson D."/>
            <person name="Bemis G."/>
            <person name="Bentley D."/>
            <person name="Bradshaw H."/>
            <person name="Bourne S."/>
            <person name="Cordes M."/>
            <person name="Du Z."/>
            <person name="Fulton L."/>
            <person name="Goela D."/>
            <person name="Graves T."/>
            <person name="Hawkins J."/>
            <person name="Hinds K."/>
            <person name="Kemp K."/>
            <person name="Latreille P."/>
            <person name="Layman D."/>
            <person name="Ozersky P."/>
            <person name="Rohlfing T."/>
            <person name="Scheet P."/>
            <person name="Walker C."/>
            <person name="Wamsley A."/>
            <person name="Wohldmann P."/>
            <person name="Pepin K."/>
            <person name="Nelson J."/>
            <person name="Korf I."/>
            <person name="Bedell J.A."/>
            <person name="Hillier L.W."/>
            <person name="Mardis E."/>
            <person name="Waterston R."/>
            <person name="Wilson R."/>
            <person name="Emanuel B.S."/>
            <person name="Shaikh T."/>
            <person name="Kurahashi H."/>
            <person name="Saitta S."/>
            <person name="Budarf M.L."/>
            <person name="McDermid H.E."/>
            <person name="Johnson A."/>
            <person name="Wong A.C.C."/>
            <person name="Morrow B.E."/>
            <person name="Edelmann L."/>
            <person name="Kim U.J."/>
            <person name="Shizuya H."/>
            <person name="Simon M.I."/>
            <person name="Dumanski J.P."/>
            <person name="Peyrard M."/>
            <person name="Kedra D."/>
            <person name="Seroussi E."/>
            <person name="Fransson I."/>
            <person name="Tapia I."/>
            <person name="Bruder C.E."/>
            <person name="O'Brien K.P."/>
            <person name="Wilkinson P."/>
            <person name="Bodenteich A."/>
            <person name="Hartman K."/>
            <person name="Hu X."/>
            <person name="Khan A.S."/>
            <person name="Lane L."/>
            <person name="Tilahun Y."/>
            <person name="Wright H."/>
        </authorList>
    </citation>
    <scope>NUCLEOTIDE SEQUENCE [LARGE SCALE GENOMIC DNA]</scope>
</reference>
<reference key="4">
    <citation type="submission" date="2005-07" db="EMBL/GenBank/DDBJ databases">
        <authorList>
            <person name="Mural R.J."/>
            <person name="Istrail S."/>
            <person name="Sutton G.G."/>
            <person name="Florea L."/>
            <person name="Halpern A.L."/>
            <person name="Mobarry C.M."/>
            <person name="Lippert R."/>
            <person name="Walenz B."/>
            <person name="Shatkay H."/>
            <person name="Dew I."/>
            <person name="Miller J.R."/>
            <person name="Flanigan M.J."/>
            <person name="Edwards N.J."/>
            <person name="Bolanos R."/>
            <person name="Fasulo D."/>
            <person name="Halldorsson B.V."/>
            <person name="Hannenhalli S."/>
            <person name="Turner R."/>
            <person name="Yooseph S."/>
            <person name="Lu F."/>
            <person name="Nusskern D.R."/>
            <person name="Shue B.C."/>
            <person name="Zheng X.H."/>
            <person name="Zhong F."/>
            <person name="Delcher A.L."/>
            <person name="Huson D.H."/>
            <person name="Kravitz S.A."/>
            <person name="Mouchard L."/>
            <person name="Reinert K."/>
            <person name="Remington K.A."/>
            <person name="Clark A.G."/>
            <person name="Waterman M.S."/>
            <person name="Eichler E.E."/>
            <person name="Adams M.D."/>
            <person name="Hunkapiller M.W."/>
            <person name="Myers E.W."/>
            <person name="Venter J.C."/>
        </authorList>
    </citation>
    <scope>NUCLEOTIDE SEQUENCE [LARGE SCALE GENOMIC DNA]</scope>
</reference>
<reference key="5">
    <citation type="journal article" date="2004" name="Genome Res.">
        <title>The status, quality, and expansion of the NIH full-length cDNA project: the Mammalian Gene Collection (MGC).</title>
        <authorList>
            <consortium name="The MGC Project Team"/>
        </authorList>
    </citation>
    <scope>NUCLEOTIDE SEQUENCE [LARGE SCALE MRNA] (ISOFORM 1)</scope>
    <source>
        <tissue>Eye</tissue>
    </source>
</reference>
<accession>Q96EK2</accession>
<accession>B0QYW3</accession>
<accession>B0QYW4</accession>
<accession>B3KRU4</accession>
<accession>B7Z4F8</accession>
<accession>Q5TFL2</accession>
<accession>Q6ICC0</accession>
<proteinExistence type="evidence at protein level"/>